<accession>Q2T9X3</accession>
<name>SPRY7_BOVIN</name>
<evidence type="ECO:0000250" key="1">
    <source>
        <dbReference type="UniProtKB" id="Q5W111"/>
    </source>
</evidence>
<evidence type="ECO:0000255" key="2">
    <source>
        <dbReference type="PROSITE-ProRule" id="PRU00548"/>
    </source>
</evidence>
<feature type="initiator methionine" description="Removed" evidence="1">
    <location>
        <position position="1"/>
    </location>
</feature>
<feature type="chain" id="PRO_0000243924" description="SPRY domain-containing protein 7">
    <location>
        <begin position="2"/>
        <end position="196"/>
    </location>
</feature>
<feature type="domain" description="B30.2/SPRY" evidence="2">
    <location>
        <begin position="2"/>
        <end position="184"/>
    </location>
</feature>
<feature type="modified residue" description="N-acetylalanine" evidence="1">
    <location>
        <position position="2"/>
    </location>
</feature>
<sequence length="196" mass="21638">MAASVFCCLRCCRDGGTGHIPLKEMPAVQLDTQHMGTDVVIVKNGRRICGTGGCLASAPLHQNKSYFEFKIQSTGIWGIGVATQKVNLNQIPLGRDVHSLVMRNDGALYHNNEEKNRLPANSLPQEGDVVGITYDHVELNVYLNGKNMHCPASGIRGTVYPVVYVDDSAILDCQFSEFYHTPPPGFEKILFEQQIF</sequence>
<organism>
    <name type="scientific">Bos taurus</name>
    <name type="common">Bovine</name>
    <dbReference type="NCBI Taxonomy" id="9913"/>
    <lineage>
        <taxon>Eukaryota</taxon>
        <taxon>Metazoa</taxon>
        <taxon>Chordata</taxon>
        <taxon>Craniata</taxon>
        <taxon>Vertebrata</taxon>
        <taxon>Euteleostomi</taxon>
        <taxon>Mammalia</taxon>
        <taxon>Eutheria</taxon>
        <taxon>Laurasiatheria</taxon>
        <taxon>Artiodactyla</taxon>
        <taxon>Ruminantia</taxon>
        <taxon>Pecora</taxon>
        <taxon>Bovidae</taxon>
        <taxon>Bovinae</taxon>
        <taxon>Bos</taxon>
    </lineage>
</organism>
<gene>
    <name type="primary">SPRYD7</name>
    <name type="synonym">CLLD6</name>
</gene>
<dbReference type="EMBL" id="BC111224">
    <property type="protein sequence ID" value="AAI11225.1"/>
    <property type="molecule type" value="mRNA"/>
</dbReference>
<dbReference type="RefSeq" id="NP_001033295.1">
    <property type="nucleotide sequence ID" value="NM_001038206.2"/>
</dbReference>
<dbReference type="SMR" id="Q2T9X3"/>
<dbReference type="FunCoup" id="Q2T9X3">
    <property type="interactions" value="1274"/>
</dbReference>
<dbReference type="STRING" id="9913.ENSBTAP00000060952"/>
<dbReference type="PaxDb" id="9913-ENSBTAP00000025061"/>
<dbReference type="GeneID" id="615298"/>
<dbReference type="KEGG" id="bta:615298"/>
<dbReference type="CTD" id="57213"/>
<dbReference type="VEuPathDB" id="HostDB:ENSBTAG00000018829"/>
<dbReference type="eggNOG" id="KOG4030">
    <property type="taxonomic scope" value="Eukaryota"/>
</dbReference>
<dbReference type="HOGENOM" id="CLU_085855_0_0_1"/>
<dbReference type="InParanoid" id="Q2T9X3"/>
<dbReference type="OMA" id="HMGNEVV"/>
<dbReference type="OrthoDB" id="40953at2759"/>
<dbReference type="TreeFam" id="TF314996"/>
<dbReference type="Proteomes" id="UP000009136">
    <property type="component" value="Chromosome 12"/>
</dbReference>
<dbReference type="Bgee" id="ENSBTAG00000018829">
    <property type="expression patterns" value="Expressed in semen and 107 other cell types or tissues"/>
</dbReference>
<dbReference type="CDD" id="cd12880">
    <property type="entry name" value="SPRYD7"/>
    <property type="match status" value="1"/>
</dbReference>
<dbReference type="Gene3D" id="2.60.120.920">
    <property type="match status" value="1"/>
</dbReference>
<dbReference type="InterPro" id="IPR001870">
    <property type="entry name" value="B30.2/SPRY"/>
</dbReference>
<dbReference type="InterPro" id="IPR043136">
    <property type="entry name" value="B30.2/SPRY_sf"/>
</dbReference>
<dbReference type="InterPro" id="IPR013320">
    <property type="entry name" value="ConA-like_dom_sf"/>
</dbReference>
<dbReference type="InterPro" id="IPR003877">
    <property type="entry name" value="SPRY_dom"/>
</dbReference>
<dbReference type="InterPro" id="IPR035766">
    <property type="entry name" value="SPRYD7"/>
</dbReference>
<dbReference type="PANTHER" id="PTHR20951">
    <property type="entry name" value="C13ORF1 PROTEIN-RELATED"/>
    <property type="match status" value="1"/>
</dbReference>
<dbReference type="PANTHER" id="PTHR20951:SF2">
    <property type="entry name" value="SPRY DOMAIN-CONTAINING PROTEIN 7"/>
    <property type="match status" value="1"/>
</dbReference>
<dbReference type="Pfam" id="PF00622">
    <property type="entry name" value="SPRY"/>
    <property type="match status" value="1"/>
</dbReference>
<dbReference type="SMART" id="SM00449">
    <property type="entry name" value="SPRY"/>
    <property type="match status" value="1"/>
</dbReference>
<dbReference type="SUPFAM" id="SSF49899">
    <property type="entry name" value="Concanavalin A-like lectins/glucanases"/>
    <property type="match status" value="1"/>
</dbReference>
<dbReference type="PROSITE" id="PS50188">
    <property type="entry name" value="B302_SPRY"/>
    <property type="match status" value="1"/>
</dbReference>
<protein>
    <recommendedName>
        <fullName>SPRY domain-containing protein 7</fullName>
    </recommendedName>
    <alternativeName>
        <fullName>Chronic lymphocytic leukemia deletion region gene 6 protein homolog</fullName>
        <shortName>CLL deletion region gene 6 protein homolog</shortName>
    </alternativeName>
</protein>
<reference key="1">
    <citation type="submission" date="2005-12" db="EMBL/GenBank/DDBJ databases">
        <authorList>
            <consortium name="NIH - Mammalian Gene Collection (MGC) project"/>
        </authorList>
    </citation>
    <scope>NUCLEOTIDE SEQUENCE [LARGE SCALE MRNA]</scope>
    <source>
        <strain>Crossbred X Angus</strain>
        <tissue>Liver</tissue>
    </source>
</reference>
<keyword id="KW-0007">Acetylation</keyword>
<keyword id="KW-1185">Reference proteome</keyword>
<proteinExistence type="evidence at transcript level"/>